<proteinExistence type="inferred from homology"/>
<evidence type="ECO:0000255" key="1">
    <source>
        <dbReference type="HAMAP-Rule" id="MF_00201"/>
    </source>
</evidence>
<organism>
    <name type="scientific">Actinobacillus pleuropneumoniae serotype 7 (strain AP76)</name>
    <dbReference type="NCBI Taxonomy" id="537457"/>
    <lineage>
        <taxon>Bacteria</taxon>
        <taxon>Pseudomonadati</taxon>
        <taxon>Pseudomonadota</taxon>
        <taxon>Gammaproteobacteria</taxon>
        <taxon>Pasteurellales</taxon>
        <taxon>Pasteurellaceae</taxon>
        <taxon>Actinobacillus</taxon>
    </lineage>
</organism>
<keyword id="KW-0227">DNA damage</keyword>
<keyword id="KW-0233">DNA recombination</keyword>
<keyword id="KW-0234">DNA repair</keyword>
<sequence length="240" mass="27300">MIENWHRGFVLHRREYSETSLLVDFFTEEHGRITLLAKGARRPRSPLKAVLQPFTPLLLRWSGKGDLKTLTKAEPASLTLPMQTLALYSGFYVNEVLARVLENQTAYPELFQHYLQCMTRLATQPEQIEPILRTFEFQMLKALGYGVNFSICAATGDPVSPSMTYQFKENEGFIASLLRNNASFLGKDLLAFEQLDFSDKATLQAAKRFTRMALKPYLGSQPLKSRELFQSILPNKLKSG</sequence>
<dbReference type="EMBL" id="CP001091">
    <property type="protein sequence ID" value="ACE61239.1"/>
    <property type="molecule type" value="Genomic_DNA"/>
</dbReference>
<dbReference type="RefSeq" id="WP_005617027.1">
    <property type="nucleotide sequence ID" value="NC_010939.1"/>
</dbReference>
<dbReference type="SMR" id="B3GX87"/>
<dbReference type="KEGG" id="apa:APP7_0587"/>
<dbReference type="HOGENOM" id="CLU_066645_1_0_6"/>
<dbReference type="Proteomes" id="UP000001226">
    <property type="component" value="Chromosome"/>
</dbReference>
<dbReference type="GO" id="GO:0043590">
    <property type="term" value="C:bacterial nucleoid"/>
    <property type="evidence" value="ECO:0007669"/>
    <property type="project" value="TreeGrafter"/>
</dbReference>
<dbReference type="GO" id="GO:0006310">
    <property type="term" value="P:DNA recombination"/>
    <property type="evidence" value="ECO:0007669"/>
    <property type="project" value="UniProtKB-UniRule"/>
</dbReference>
<dbReference type="GO" id="GO:0006302">
    <property type="term" value="P:double-strand break repair"/>
    <property type="evidence" value="ECO:0007669"/>
    <property type="project" value="TreeGrafter"/>
</dbReference>
<dbReference type="Gene3D" id="2.40.50.140">
    <property type="entry name" value="Nucleic acid-binding proteins"/>
    <property type="match status" value="1"/>
</dbReference>
<dbReference type="Gene3D" id="1.20.1440.120">
    <property type="entry name" value="Recombination protein O, C-terminal domain"/>
    <property type="match status" value="1"/>
</dbReference>
<dbReference type="HAMAP" id="MF_00201">
    <property type="entry name" value="RecO"/>
    <property type="match status" value="1"/>
</dbReference>
<dbReference type="InterPro" id="IPR037278">
    <property type="entry name" value="ARFGAP/RecO"/>
</dbReference>
<dbReference type="InterPro" id="IPR022572">
    <property type="entry name" value="DNA_rep/recomb_RecO_N"/>
</dbReference>
<dbReference type="InterPro" id="IPR012340">
    <property type="entry name" value="NA-bd_OB-fold"/>
</dbReference>
<dbReference type="InterPro" id="IPR003717">
    <property type="entry name" value="RecO"/>
</dbReference>
<dbReference type="InterPro" id="IPR042242">
    <property type="entry name" value="RecO_C"/>
</dbReference>
<dbReference type="NCBIfam" id="TIGR00613">
    <property type="entry name" value="reco"/>
    <property type="match status" value="1"/>
</dbReference>
<dbReference type="PANTHER" id="PTHR33991">
    <property type="entry name" value="DNA REPAIR PROTEIN RECO"/>
    <property type="match status" value="1"/>
</dbReference>
<dbReference type="PANTHER" id="PTHR33991:SF1">
    <property type="entry name" value="DNA REPAIR PROTEIN RECO"/>
    <property type="match status" value="1"/>
</dbReference>
<dbReference type="Pfam" id="PF02565">
    <property type="entry name" value="RecO_C"/>
    <property type="match status" value="1"/>
</dbReference>
<dbReference type="Pfam" id="PF11967">
    <property type="entry name" value="RecO_N"/>
    <property type="match status" value="1"/>
</dbReference>
<dbReference type="SUPFAM" id="SSF57863">
    <property type="entry name" value="ArfGap/RecO-like zinc finger"/>
    <property type="match status" value="1"/>
</dbReference>
<dbReference type="SUPFAM" id="SSF50249">
    <property type="entry name" value="Nucleic acid-binding proteins"/>
    <property type="match status" value="1"/>
</dbReference>
<accession>B3GX87</accession>
<gene>
    <name evidence="1" type="primary">recO</name>
    <name type="ordered locus">APP7_0587</name>
</gene>
<protein>
    <recommendedName>
        <fullName evidence="1">DNA repair protein RecO</fullName>
    </recommendedName>
    <alternativeName>
        <fullName evidence="1">Recombination protein O</fullName>
    </alternativeName>
</protein>
<feature type="chain" id="PRO_1000099359" description="DNA repair protein RecO">
    <location>
        <begin position="1"/>
        <end position="240"/>
    </location>
</feature>
<reference key="1">
    <citation type="submission" date="2008-06" db="EMBL/GenBank/DDBJ databases">
        <title>Genome and proteome analysis of A. pleuropneumoniae serotype 7.</title>
        <authorList>
            <person name="Linke B."/>
            <person name="Buettner F."/>
            <person name="Martinez-Arias R."/>
            <person name="Goesmann A."/>
            <person name="Baltes N."/>
            <person name="Tegetmeyer H."/>
            <person name="Singh M."/>
            <person name="Gerlach G.F."/>
        </authorList>
    </citation>
    <scope>NUCLEOTIDE SEQUENCE [LARGE SCALE GENOMIC DNA]</scope>
    <source>
        <strain>AP76</strain>
    </source>
</reference>
<comment type="function">
    <text evidence="1">Involved in DNA repair and RecF pathway recombination.</text>
</comment>
<comment type="similarity">
    <text evidence="1">Belongs to the RecO family.</text>
</comment>
<name>RECO_ACTP7</name>